<comment type="function">
    <text evidence="2 6">Binds RNA. Associates with 28S, 18S and 5.8S mature rRNAs, several rRNA precursors and probably U3 small nucleolar RNA. May be involved in regulation of intermediate and late steps of rRNA processing. May be involved in ribosome assembly (By similarity). Required for expression of cell cycle genes such as CYCD3-1, RNR2A and CDKB1-1. Promotes, in a dose- and auxin-dependent manner, organ growth by stimulating both cell proliferation and expansion, via the regulation of RBR1 levels (PubMed:17024182).</text>
</comment>
<comment type="subunit">
    <text evidence="2 7">Component of a ribonucleoprotein complex (By similarity). Interacts with REIL1 and REIL2 (PubMed:24603461).</text>
</comment>
<comment type="subcellular location">
    <subcellularLocation>
        <location evidence="5">Nucleus</location>
    </subcellularLocation>
</comment>
<comment type="alternative products">
    <event type="alternative splicing"/>
    <isoform>
        <id>Q96327-1</id>
        <name>1</name>
        <sequence type="displayed"/>
    </isoform>
    <isoform>
        <id>Q96327-2</id>
        <name>2</name>
        <sequence type="described" ref="VSP_057636"/>
    </isoform>
    <isoform>
        <id>Q96327-3</id>
        <name>3</name>
        <sequence type="described" ref="VSP_057634"/>
    </isoform>
    <isoform>
        <id>Q96327-4</id>
        <name>4</name>
        <sequence type="described" ref="VSP_057635"/>
    </isoform>
</comment>
<comment type="tissue specificity">
    <text evidence="5">Strongly expressed in calls, roots and flowers, to a lower extent, in stems and siliques, but hardly detectable in leaves.</text>
</comment>
<comment type="developmental stage">
    <text evidence="6">Accumulates mostly in developing organs. During early stages of organ development, promotes cell proliferation, influences cell-size threshold for division and shortens the period of meristematic activity. In postmitotic cells, enhances cell expansion.</text>
</comment>
<comment type="induction">
    <text evidence="5 6">Cell-cycle regulated expression with accumulation during the G1-to-S phase (PubMed:15689342). Accumulates in response to auxin. Expression levels correlate with genes involved in ribosome biogenesis and function (PubMed:17024182).</text>
</comment>
<comment type="disruption phenotype">
    <text evidence="6">Distorted reduced growth leading to small plants, and impaired fertility. At the seedling stage, a delay in leaf initiation and distorted leaf shape were characteristic of the silenced lines.</text>
</comment>
<comment type="similarity">
    <text evidence="11">Belongs to the peptidase M24 family.</text>
</comment>
<evidence type="ECO:0000250" key="1">
    <source>
        <dbReference type="UniProtKB" id="P50580"/>
    </source>
</evidence>
<evidence type="ECO:0000250" key="2">
    <source>
        <dbReference type="UniProtKB" id="Q9UQ80"/>
    </source>
</evidence>
<evidence type="ECO:0000255" key="3"/>
<evidence type="ECO:0000256" key="4">
    <source>
        <dbReference type="SAM" id="MobiDB-lite"/>
    </source>
</evidence>
<evidence type="ECO:0000269" key="5">
    <source>
    </source>
</evidence>
<evidence type="ECO:0000269" key="6">
    <source>
    </source>
</evidence>
<evidence type="ECO:0000269" key="7">
    <source>
    </source>
</evidence>
<evidence type="ECO:0000303" key="8">
    <source>
    </source>
</evidence>
<evidence type="ECO:0000303" key="9">
    <source>
    </source>
</evidence>
<evidence type="ECO:0000303" key="10">
    <source>
    </source>
</evidence>
<evidence type="ECO:0000305" key="11"/>
<evidence type="ECO:0000312" key="12">
    <source>
        <dbReference type="Araport" id="AT3G51800"/>
    </source>
</evidence>
<evidence type="ECO:0000312" key="13">
    <source>
        <dbReference type="EMBL" id="AAB18127.1"/>
    </source>
</evidence>
<evidence type="ECO:0000312" key="14">
    <source>
        <dbReference type="EMBL" id="AAL25197.1"/>
    </source>
</evidence>
<evidence type="ECO:0000312" key="15">
    <source>
        <dbReference type="EMBL" id="BAH19507.1"/>
    </source>
</evidence>
<accession>Q96327</accession>
<accession>B9DFJ0</accession>
<accession>F4J4J3</accession>
<accession>F4J4J5</accession>
<accession>Q9C5I5</accession>
<proteinExistence type="evidence at protein level"/>
<dbReference type="EMBL" id="U72503">
    <property type="protein sequence ID" value="AAB18127.1"/>
    <property type="molecule type" value="mRNA"/>
</dbReference>
<dbReference type="EMBL" id="AF422841">
    <property type="protein sequence ID" value="AAM46648.1"/>
    <property type="molecule type" value="mRNA"/>
</dbReference>
<dbReference type="EMBL" id="AY056616">
    <property type="protein sequence ID" value="AAL25197.1"/>
    <property type="molecule type" value="mRNA"/>
</dbReference>
<dbReference type="EMBL" id="AY056617">
    <property type="protein sequence ID" value="AAL25198.1"/>
    <property type="molecule type" value="Genomic_DNA"/>
</dbReference>
<dbReference type="EMBL" id="AF049236">
    <property type="protein sequence ID" value="AAC14407.1"/>
    <property type="molecule type" value="Genomic_DNA"/>
</dbReference>
<dbReference type="EMBL" id="CP002686">
    <property type="protein sequence ID" value="AEE78844.1"/>
    <property type="molecule type" value="Genomic_DNA"/>
</dbReference>
<dbReference type="EMBL" id="CP002686">
    <property type="protein sequence ID" value="AEE78845.1"/>
    <property type="molecule type" value="Genomic_DNA"/>
</dbReference>
<dbReference type="EMBL" id="CP002686">
    <property type="protein sequence ID" value="AEE78846.1"/>
    <property type="molecule type" value="Genomic_DNA"/>
</dbReference>
<dbReference type="EMBL" id="AF360226">
    <property type="protein sequence ID" value="AAK25936.1"/>
    <property type="molecule type" value="mRNA"/>
</dbReference>
<dbReference type="EMBL" id="AY040067">
    <property type="protein sequence ID" value="AAK64125.1"/>
    <property type="molecule type" value="mRNA"/>
</dbReference>
<dbReference type="EMBL" id="AY142627">
    <property type="protein sequence ID" value="AAN13085.1"/>
    <property type="molecule type" value="mRNA"/>
</dbReference>
<dbReference type="EMBL" id="AK316789">
    <property type="protein sequence ID" value="BAH19507.1"/>
    <property type="molecule type" value="mRNA"/>
</dbReference>
<dbReference type="EMBL" id="AV544387">
    <property type="status" value="NOT_ANNOTATED_CDS"/>
    <property type="molecule type" value="mRNA"/>
</dbReference>
<dbReference type="PIR" id="T51151">
    <property type="entry name" value="T51151"/>
</dbReference>
<dbReference type="RefSeq" id="NP_001190060.1">
    <molecule id="Q96327-4"/>
    <property type="nucleotide sequence ID" value="NM_001203131.1"/>
</dbReference>
<dbReference type="RefSeq" id="NP_190748.1">
    <molecule id="Q96327-1"/>
    <property type="nucleotide sequence ID" value="NM_115039.4"/>
</dbReference>
<dbReference type="RefSeq" id="NP_850679.1">
    <molecule id="Q96327-3"/>
    <property type="nucleotide sequence ID" value="NM_180348.3"/>
</dbReference>
<dbReference type="SMR" id="Q96327"/>
<dbReference type="FunCoup" id="Q96327">
    <property type="interactions" value="4586"/>
</dbReference>
<dbReference type="STRING" id="3702.Q96327"/>
<dbReference type="MEROPS" id="M24.978"/>
<dbReference type="iPTMnet" id="Q96327"/>
<dbReference type="MetOSite" id="Q96327"/>
<dbReference type="SwissPalm" id="Q96327"/>
<dbReference type="PaxDb" id="3702-AT3G51800.2"/>
<dbReference type="ProteomicsDB" id="224715">
    <molecule id="Q96327-1"/>
</dbReference>
<dbReference type="EnsemblPlants" id="AT3G51800.1">
    <molecule id="Q96327-1"/>
    <property type="protein sequence ID" value="AT3G51800.1"/>
    <property type="gene ID" value="AT3G51800"/>
</dbReference>
<dbReference type="EnsemblPlants" id="AT3G51800.2">
    <molecule id="Q96327-3"/>
    <property type="protein sequence ID" value="AT3G51800.2"/>
    <property type="gene ID" value="AT3G51800"/>
</dbReference>
<dbReference type="EnsemblPlants" id="AT3G51800.3">
    <molecule id="Q96327-4"/>
    <property type="protein sequence ID" value="AT3G51800.3"/>
    <property type="gene ID" value="AT3G51800"/>
</dbReference>
<dbReference type="GeneID" id="824343"/>
<dbReference type="Gramene" id="AT3G51800.1">
    <molecule id="Q96327-1"/>
    <property type="protein sequence ID" value="AT3G51800.1"/>
    <property type="gene ID" value="AT3G51800"/>
</dbReference>
<dbReference type="Gramene" id="AT3G51800.2">
    <molecule id="Q96327-3"/>
    <property type="protein sequence ID" value="AT3G51800.2"/>
    <property type="gene ID" value="AT3G51800"/>
</dbReference>
<dbReference type="Gramene" id="AT3G51800.3">
    <molecule id="Q96327-4"/>
    <property type="protein sequence ID" value="AT3G51800.3"/>
    <property type="gene ID" value="AT3G51800"/>
</dbReference>
<dbReference type="KEGG" id="ath:AT3G51800"/>
<dbReference type="Araport" id="AT3G51800"/>
<dbReference type="TAIR" id="AT3G51800">
    <property type="gene designation" value="ATG2"/>
</dbReference>
<dbReference type="eggNOG" id="KOG2776">
    <property type="taxonomic scope" value="Eukaryota"/>
</dbReference>
<dbReference type="InParanoid" id="Q96327"/>
<dbReference type="OMA" id="VECTKHR"/>
<dbReference type="OrthoDB" id="5876363at2759"/>
<dbReference type="PhylomeDB" id="Q96327"/>
<dbReference type="CD-CODE" id="4299E36E">
    <property type="entry name" value="Nucleolus"/>
</dbReference>
<dbReference type="PRO" id="PR:Q96327"/>
<dbReference type="Proteomes" id="UP000006548">
    <property type="component" value="Chromosome 3"/>
</dbReference>
<dbReference type="ExpressionAtlas" id="Q96327">
    <property type="expression patterns" value="baseline and differential"/>
</dbReference>
<dbReference type="GO" id="GO:0005829">
    <property type="term" value="C:cytosol"/>
    <property type="evidence" value="ECO:0000314"/>
    <property type="project" value="TAIR"/>
</dbReference>
<dbReference type="GO" id="GO:0005730">
    <property type="term" value="C:nucleolus"/>
    <property type="evidence" value="ECO:0000314"/>
    <property type="project" value="TAIR"/>
</dbReference>
<dbReference type="GO" id="GO:0005634">
    <property type="term" value="C:nucleus"/>
    <property type="evidence" value="ECO:0000314"/>
    <property type="project" value="UniProtKB"/>
</dbReference>
<dbReference type="GO" id="GO:1990904">
    <property type="term" value="C:ribonucleoprotein complex"/>
    <property type="evidence" value="ECO:0007669"/>
    <property type="project" value="UniProtKB-KW"/>
</dbReference>
<dbReference type="GO" id="GO:0003729">
    <property type="term" value="F:mRNA binding"/>
    <property type="evidence" value="ECO:0000314"/>
    <property type="project" value="TAIR"/>
</dbReference>
<dbReference type="GO" id="GO:0009734">
    <property type="term" value="P:auxin-activated signaling pathway"/>
    <property type="evidence" value="ECO:0000315"/>
    <property type="project" value="UniProtKB"/>
</dbReference>
<dbReference type="GO" id="GO:0044843">
    <property type="term" value="P:cell cycle G1/S phase transition"/>
    <property type="evidence" value="ECO:0000270"/>
    <property type="project" value="UniProtKB"/>
</dbReference>
<dbReference type="GO" id="GO:0051302">
    <property type="term" value="P:regulation of cell division"/>
    <property type="evidence" value="ECO:0000315"/>
    <property type="project" value="UniProtKB"/>
</dbReference>
<dbReference type="GO" id="GO:0001558">
    <property type="term" value="P:regulation of cell growth"/>
    <property type="evidence" value="ECO:0000315"/>
    <property type="project" value="UniProtKB"/>
</dbReference>
<dbReference type="GO" id="GO:0006364">
    <property type="term" value="P:rRNA processing"/>
    <property type="evidence" value="ECO:0007669"/>
    <property type="project" value="UniProtKB-KW"/>
</dbReference>
<dbReference type="CDD" id="cd01089">
    <property type="entry name" value="PA2G4-like"/>
    <property type="match status" value="1"/>
</dbReference>
<dbReference type="FunFam" id="3.90.230.10:FF:000012">
    <property type="entry name" value="ERBB-3 BINDING PROTEIN 1"/>
    <property type="match status" value="1"/>
</dbReference>
<dbReference type="FunFam" id="1.10.10.10:FF:000029">
    <property type="entry name" value="Proliferation-associated 2G4, a"/>
    <property type="match status" value="1"/>
</dbReference>
<dbReference type="Gene3D" id="3.90.230.10">
    <property type="entry name" value="Creatinase/methionine aminopeptidase superfamily"/>
    <property type="match status" value="1"/>
</dbReference>
<dbReference type="Gene3D" id="1.10.10.10">
    <property type="entry name" value="Winged helix-like DNA-binding domain superfamily/Winged helix DNA-binding domain"/>
    <property type="match status" value="1"/>
</dbReference>
<dbReference type="InterPro" id="IPR036005">
    <property type="entry name" value="Creatinase/aminopeptidase-like"/>
</dbReference>
<dbReference type="InterPro" id="IPR004545">
    <property type="entry name" value="PA2G4"/>
</dbReference>
<dbReference type="InterPro" id="IPR047113">
    <property type="entry name" value="PA2G4/ARX1"/>
</dbReference>
<dbReference type="InterPro" id="IPR000994">
    <property type="entry name" value="Pept_M24"/>
</dbReference>
<dbReference type="InterPro" id="IPR001714">
    <property type="entry name" value="Pept_M24_MAP"/>
</dbReference>
<dbReference type="InterPro" id="IPR036388">
    <property type="entry name" value="WH-like_DNA-bd_sf"/>
</dbReference>
<dbReference type="InterPro" id="IPR036390">
    <property type="entry name" value="WH_DNA-bd_sf"/>
</dbReference>
<dbReference type="NCBIfam" id="TIGR00495">
    <property type="entry name" value="crvDNA_42K"/>
    <property type="match status" value="1"/>
</dbReference>
<dbReference type="PANTHER" id="PTHR10804:SF11">
    <property type="entry name" value="PROLIFERATION-ASSOCIATED PROTEIN 2G4"/>
    <property type="match status" value="1"/>
</dbReference>
<dbReference type="PANTHER" id="PTHR10804">
    <property type="entry name" value="PROTEASE FAMILY M24 METHIONYL AMINOPEPTIDASE, AMINOPEPTIDASE P"/>
    <property type="match status" value="1"/>
</dbReference>
<dbReference type="Pfam" id="PF00557">
    <property type="entry name" value="Peptidase_M24"/>
    <property type="match status" value="1"/>
</dbReference>
<dbReference type="PRINTS" id="PR00599">
    <property type="entry name" value="MAPEPTIDASE"/>
</dbReference>
<dbReference type="SUPFAM" id="SSF55920">
    <property type="entry name" value="Creatinase/aminopeptidase"/>
    <property type="match status" value="1"/>
</dbReference>
<dbReference type="SUPFAM" id="SSF46785">
    <property type="entry name" value="Winged helix' DNA-binding domain"/>
    <property type="match status" value="1"/>
</dbReference>
<keyword id="KW-0025">Alternative splicing</keyword>
<keyword id="KW-0927">Auxin signaling pathway</keyword>
<keyword id="KW-0217">Developmental protein</keyword>
<keyword id="KW-0539">Nucleus</keyword>
<keyword id="KW-1185">Reference proteome</keyword>
<keyword id="KW-0687">Ribonucleoprotein</keyword>
<keyword id="KW-0694">RNA-binding</keyword>
<keyword id="KW-0698">rRNA processing</keyword>
<organism evidence="13">
    <name type="scientific">Arabidopsis thaliana</name>
    <name type="common">Mouse-ear cress</name>
    <dbReference type="NCBI Taxonomy" id="3702"/>
    <lineage>
        <taxon>Eukaryota</taxon>
        <taxon>Viridiplantae</taxon>
        <taxon>Streptophyta</taxon>
        <taxon>Embryophyta</taxon>
        <taxon>Tracheophyta</taxon>
        <taxon>Spermatophyta</taxon>
        <taxon>Magnoliopsida</taxon>
        <taxon>eudicotyledons</taxon>
        <taxon>Gunneridae</taxon>
        <taxon>Pentapetalae</taxon>
        <taxon>rosids</taxon>
        <taxon>malvids</taxon>
        <taxon>Brassicales</taxon>
        <taxon>Brassicaceae</taxon>
        <taxon>Camelineae</taxon>
        <taxon>Arabidopsis</taxon>
    </lineage>
</organism>
<name>EBP1_ARATH</name>
<sequence length="392" mass="42979">MSSDDERDEKELSLTSPEVVTKYKSAAEIVNKALQVVLAECKPKAKIVDICEKGDSFIKEQTASMYKNSKKKIERGVAFPTCISVNNTVGHFSPLASDESVLEDGDMVKIDMGCHIDGFIALVGHTHVLQEGPLSGRKADVIAAANTAADVALRLVRPGKKNTDVTEAIQKVAAAYDCKIVEGVLSHQLKQHVIDGNKVVLSVSSPETTVDEVEFEENEVYAIDIVASTGDGKPKLLDEKQTTIYKKDESVNYQLKMKASRFIISEIKQNFPRMPFTARSLEEKRARLGLVECVNHGHLQPYPVLYEKPGDFVAQIKFTVLLMPNGSDRITSHTLQELPKKTIEDPEIKGWLALGIKKKKGGGKKKKAQKAGEKGEASTEAEPMDASSNAQE</sequence>
<gene>
    <name evidence="10" type="primary">EBP1</name>
    <name evidence="14" type="synonym">CAM1</name>
    <name evidence="9" type="synonym">CPR</name>
    <name evidence="12" type="ordered locus">At3g51800</name>
</gene>
<feature type="chain" id="PRO_0000432961" description="ERBB-3 BINDING PROTEIN 1">
    <location>
        <begin position="1"/>
        <end position="392"/>
    </location>
</feature>
<feature type="region of interest" description="Necessary for nucleolar localization" evidence="2">
    <location>
        <begin position="1"/>
        <end position="50"/>
    </location>
</feature>
<feature type="region of interest" description="RNA-binding" evidence="2">
    <location>
        <begin position="48"/>
        <end position="56"/>
    </location>
</feature>
<feature type="region of interest" description="Necessary for nucleolar localization" evidence="2">
    <location>
        <begin position="298"/>
        <end position="392"/>
    </location>
</feature>
<feature type="region of interest" description="Interaction with RNA" evidence="1">
    <location>
        <begin position="355"/>
        <end position="372"/>
    </location>
</feature>
<feature type="region of interest" description="Disordered" evidence="4">
    <location>
        <begin position="358"/>
        <end position="392"/>
    </location>
</feature>
<feature type="short sequence motif" description="Nuclear localization signal" evidence="3">
    <location>
        <begin position="357"/>
        <end position="367"/>
    </location>
</feature>
<feature type="compositionally biased region" description="Basic residues" evidence="4">
    <location>
        <begin position="358"/>
        <end position="369"/>
    </location>
</feature>
<feature type="splice variant" id="VSP_057634" description="In isoform 3.">
    <original>K</original>
    <variation>KPGSCRFGFL</variation>
    <location>
        <position position="308"/>
    </location>
</feature>
<feature type="splice variant" id="VSP_057635" description="In isoform 4.">
    <location>
        <begin position="357"/>
        <end position="363"/>
    </location>
</feature>
<feature type="splice variant" id="VSP_057636" description="In isoform 2.">
    <location>
        <begin position="363"/>
        <end position="392"/>
    </location>
</feature>
<feature type="sequence conflict" description="In Ref. 6; AAK25936/AAK64125." evidence="11" ref="6">
    <original>E</original>
    <variation>D</variation>
    <location>
        <position position="52"/>
    </location>
</feature>
<protein>
    <recommendedName>
        <fullName evidence="10">ERBB-3 BINDING PROTEIN 1</fullName>
        <shortName evidence="10">AtEBP1</shortName>
    </recommendedName>
    <alternativeName>
        <fullName evidence="10">Proliferation-associated protein G2p</fullName>
        <shortName evidence="8">AtG2</shortName>
    </alternativeName>
    <alternativeName>
        <fullName evidence="9">Protein CELL-PROLIFERATION-RELATED</fullName>
        <shortName evidence="9">AtCPR</shortName>
    </alternativeName>
</protein>
<reference key="1">
    <citation type="submission" date="1996-09" db="EMBL/GenBank/DDBJ databases">
        <title>Structure of the Arabidopsis thaliana Em1 locus.</title>
        <authorList>
            <person name="Grellet F."/>
            <person name="Gaubier P."/>
            <person name="Wu H.-J."/>
            <person name="Laudie M."/>
            <person name="Berger C."/>
            <person name="Delseny M."/>
        </authorList>
    </citation>
    <scope>NUCLEOTIDE SEQUENCE [MRNA]</scope>
    <source>
        <strain>cv. Columbia</strain>
    </source>
</reference>
<reference key="2">
    <citation type="submission" date="2001-09" db="EMBL/GenBank/DDBJ databases">
        <authorList>
            <person name="Yiguo S."/>
            <person name="Shouyi C."/>
        </authorList>
    </citation>
    <scope>NUCLEOTIDE SEQUENCE [MRNA]</scope>
</reference>
<reference key="3">
    <citation type="journal article" date="2005" name="J. Exp. Bot.">
        <title>Characterization of a novel cell cycle-related gene from Arabidopsis.</title>
        <authorList>
            <person name="Zhang W.-K."/>
            <person name="Shen Y.-G."/>
            <person name="He X.-J."/>
            <person name="Du B.-X."/>
            <person name="Xie Z.-M."/>
            <person name="Luo G.-Z."/>
            <person name="Zhang J.-S."/>
            <person name="Chen S.-Y."/>
        </authorList>
    </citation>
    <scope>NUCLEOTIDE SEQUENCE [GENOMIC DNA / MRNA]</scope>
    <scope>TISSUE SPECIFICITY</scope>
    <scope>INDUCTION</scope>
    <scope>SUBCELLULAR LOCATION</scope>
    <source>
        <strain>cv. Columbia</strain>
    </source>
</reference>
<reference key="4">
    <citation type="journal article" date="1999" name="Plant Mol. Biol.">
        <title>Fine sequence analysis of 60 kb around the Arabidopsis thaliana AtEm1 locus on chromosome III.</title>
        <authorList>
            <person name="Comella P."/>
            <person name="Wu H.-J."/>
            <person name="Laudie M."/>
            <person name="Berger C."/>
            <person name="Cooke R."/>
            <person name="Delseny M."/>
            <person name="Grellet F."/>
        </authorList>
    </citation>
    <scope>NUCLEOTIDE SEQUENCE [LARGE SCALE GENOMIC DNA]</scope>
    <source>
        <strain>cv. Columbia</strain>
    </source>
</reference>
<reference key="5">
    <citation type="journal article" date="2017" name="Plant J.">
        <title>Araport11: a complete reannotation of the Arabidopsis thaliana reference genome.</title>
        <authorList>
            <person name="Cheng C.Y."/>
            <person name="Krishnakumar V."/>
            <person name="Chan A.P."/>
            <person name="Thibaud-Nissen F."/>
            <person name="Schobel S."/>
            <person name="Town C.D."/>
        </authorList>
    </citation>
    <scope>GENOME REANNOTATION</scope>
    <source>
        <strain>cv. Columbia</strain>
    </source>
</reference>
<reference key="6">
    <citation type="journal article" date="2003" name="Science">
        <title>Empirical analysis of transcriptional activity in the Arabidopsis genome.</title>
        <authorList>
            <person name="Yamada K."/>
            <person name="Lim J."/>
            <person name="Dale J.M."/>
            <person name="Chen H."/>
            <person name="Shinn P."/>
            <person name="Palm C.J."/>
            <person name="Southwick A.M."/>
            <person name="Wu H.C."/>
            <person name="Kim C.J."/>
            <person name="Nguyen M."/>
            <person name="Pham P.K."/>
            <person name="Cheuk R.F."/>
            <person name="Karlin-Newmann G."/>
            <person name="Liu S.X."/>
            <person name="Lam B."/>
            <person name="Sakano H."/>
            <person name="Wu T."/>
            <person name="Yu G."/>
            <person name="Miranda M."/>
            <person name="Quach H.L."/>
            <person name="Tripp M."/>
            <person name="Chang C.H."/>
            <person name="Lee J.M."/>
            <person name="Toriumi M.J."/>
            <person name="Chan M.M."/>
            <person name="Tang C.C."/>
            <person name="Onodera C.S."/>
            <person name="Deng J.M."/>
            <person name="Akiyama K."/>
            <person name="Ansari Y."/>
            <person name="Arakawa T."/>
            <person name="Banh J."/>
            <person name="Banno F."/>
            <person name="Bowser L."/>
            <person name="Brooks S.Y."/>
            <person name="Carninci P."/>
            <person name="Chao Q."/>
            <person name="Choy N."/>
            <person name="Enju A."/>
            <person name="Goldsmith A.D."/>
            <person name="Gurjal M."/>
            <person name="Hansen N.F."/>
            <person name="Hayashizaki Y."/>
            <person name="Johnson-Hopson C."/>
            <person name="Hsuan V.W."/>
            <person name="Iida K."/>
            <person name="Karnes M."/>
            <person name="Khan S."/>
            <person name="Koesema E."/>
            <person name="Ishida J."/>
            <person name="Jiang P.X."/>
            <person name="Jones T."/>
            <person name="Kawai J."/>
            <person name="Kamiya A."/>
            <person name="Meyers C."/>
            <person name="Nakajima M."/>
            <person name="Narusaka M."/>
            <person name="Seki M."/>
            <person name="Sakurai T."/>
            <person name="Satou M."/>
            <person name="Tamse R."/>
            <person name="Vaysberg M."/>
            <person name="Wallender E.K."/>
            <person name="Wong C."/>
            <person name="Yamamura Y."/>
            <person name="Yuan S."/>
            <person name="Shinozaki K."/>
            <person name="Davis R.W."/>
            <person name="Theologis A."/>
            <person name="Ecker J.R."/>
        </authorList>
    </citation>
    <scope>NUCLEOTIDE SEQUENCE [LARGE SCALE MRNA]</scope>
    <source>
        <strain>cv. Columbia</strain>
    </source>
</reference>
<reference key="7">
    <citation type="journal article" date="2009" name="DNA Res.">
        <title>Analysis of multiple occurrences of alternative splicing events in Arabidopsis thaliana using novel sequenced full-length cDNAs.</title>
        <authorList>
            <person name="Iida K."/>
            <person name="Fukami-Kobayashi K."/>
            <person name="Toyoda A."/>
            <person name="Sakaki Y."/>
            <person name="Kobayashi M."/>
            <person name="Seki M."/>
            <person name="Shinozaki K."/>
        </authorList>
    </citation>
    <scope>NUCLEOTIDE SEQUENCE [LARGE SCALE MRNA] (ISOFORM 2)</scope>
    <source>
        <strain>cv. Columbia</strain>
        <tissue evidence="15">Rosette leaf</tissue>
    </source>
</reference>
<reference key="8">
    <citation type="journal article" date="2000" name="DNA Res.">
        <title>A large scale analysis of cDNA in Arabidopsis thaliana: generation of 12,028 non-redundant expressed sequence tags from normalized and size-selected cDNA libraries.</title>
        <authorList>
            <person name="Asamizu E."/>
            <person name="Nakamura Y."/>
            <person name="Sato S."/>
            <person name="Tabata S."/>
        </authorList>
    </citation>
    <scope>NUCLEOTIDE SEQUENCE [LARGE SCALE MRNA] OF 229-392 (ISOFORM 3)</scope>
    <source>
        <strain>cv. Columbia</strain>
    </source>
</reference>
<reference key="9">
    <citation type="journal article" date="2006" name="EMBO J.">
        <title>EBP1 regulates organ size through cell growth and proliferation in plants.</title>
        <authorList>
            <person name="Horvath B.M."/>
            <person name="Magyar Z."/>
            <person name="Zhang Y."/>
            <person name="Hamburger A.W."/>
            <person name="Bako L."/>
            <person name="Visser R.G.F."/>
            <person name="Bachem C.W.B."/>
            <person name="Boegre L."/>
        </authorList>
    </citation>
    <scope>FUNCTION</scope>
    <scope>DISRUPTION PHENOTYPE</scope>
    <scope>DEVELOPMENTAL STAGE</scope>
    <scope>INDUCTION BY AUXIN</scope>
    <source>
        <strain>cv. Columbia</strain>
    </source>
</reference>
<reference key="10">
    <citation type="journal article" date="2014" name="Plant Signal. Behav.">
        <title>REIL proteins of Arabidopsis thaliana interact in yeast-2-hybrid assays with homologs of the yeast Rlp24, Rpl24A, Rlp24B, Arx1, and Jjj1 proteins.</title>
        <authorList>
            <person name="Schmidt S."/>
            <person name="Dethloff F."/>
            <person name="Beine-Golovchuk O."/>
            <person name="Kopka J."/>
        </authorList>
    </citation>
    <scope>INTERACTION WITH REIL1 AND REIL2</scope>
</reference>